<feature type="chain" id="PRO_0000402382" description="3-aminoacrylate deaminase RutC">
    <location>
        <begin position="1"/>
        <end position="128"/>
    </location>
</feature>
<feature type="strand" evidence="5">
    <location>
        <begin position="4"/>
        <end position="6"/>
    </location>
</feature>
<feature type="strand" evidence="5">
    <location>
        <begin position="20"/>
        <end position="24"/>
    </location>
</feature>
<feature type="strand" evidence="5">
    <location>
        <begin position="27"/>
        <end position="33"/>
    </location>
</feature>
<feature type="strand" evidence="5">
    <location>
        <begin position="42"/>
        <end position="44"/>
    </location>
</feature>
<feature type="helix" evidence="5">
    <location>
        <begin position="48"/>
        <end position="65"/>
    </location>
</feature>
<feature type="helix" evidence="5">
    <location>
        <begin position="70"/>
        <end position="72"/>
    </location>
</feature>
<feature type="strand" evidence="5">
    <location>
        <begin position="73"/>
        <end position="81"/>
    </location>
</feature>
<feature type="helix" evidence="5">
    <location>
        <begin position="83"/>
        <end position="85"/>
    </location>
</feature>
<feature type="helix" evidence="5">
    <location>
        <begin position="86"/>
        <end position="96"/>
    </location>
</feature>
<feature type="strand" evidence="5">
    <location>
        <begin position="103"/>
        <end position="108"/>
    </location>
</feature>
<feature type="strand" evidence="5">
    <location>
        <begin position="118"/>
        <end position="125"/>
    </location>
</feature>
<comment type="function">
    <text evidence="1">Involved in pyrimidine catabolism. Catalyzes the deamination of 3-aminoacrylate to malonic semialdehyde, a reaction that can also occur spontaneously. RutC may facilitate the reaction and modulate the metabolic fitness, rather than catalyzing essential functions.</text>
</comment>
<comment type="catalytic activity">
    <reaction evidence="1">
        <text>(Z)-3-aminoacrylate + H2O + H(+) = 3-oxopropanoate + NH4(+)</text>
        <dbReference type="Rhea" id="RHEA:34947"/>
        <dbReference type="ChEBI" id="CHEBI:15377"/>
        <dbReference type="ChEBI" id="CHEBI:15378"/>
        <dbReference type="ChEBI" id="CHEBI:28938"/>
        <dbReference type="ChEBI" id="CHEBI:33190"/>
        <dbReference type="ChEBI" id="CHEBI:59894"/>
    </reaction>
</comment>
<comment type="subunit">
    <text evidence="1 2">Homotrimer.</text>
</comment>
<comment type="domain">
    <text evidence="2">Contains a hydrophobic cavity in the center of the structure and ligand-binding clefts between two subunits.</text>
</comment>
<comment type="similarity">
    <text evidence="1">Belongs to the RutC family.</text>
</comment>
<dbReference type="EC" id="3.5.-.-" evidence="1"/>
<dbReference type="EMBL" id="AE014075">
    <property type="protein sequence ID" value="AAN79615.1"/>
    <property type="molecule type" value="Genomic_DNA"/>
</dbReference>
<dbReference type="RefSeq" id="WP_001126780.1">
    <property type="nucleotide sequence ID" value="NZ_CP051263.1"/>
</dbReference>
<dbReference type="PDB" id="3V4D">
    <property type="method" value="X-ray"/>
    <property type="resolution" value="1.95 A"/>
    <property type="chains" value="A/B/C/D/E/F=1-128"/>
</dbReference>
<dbReference type="PDBsum" id="3V4D"/>
<dbReference type="SMR" id="P0AFQ6"/>
<dbReference type="STRING" id="199310.c1147"/>
<dbReference type="GeneID" id="75171086"/>
<dbReference type="KEGG" id="ecc:c1147"/>
<dbReference type="eggNOG" id="COG0251">
    <property type="taxonomic scope" value="Bacteria"/>
</dbReference>
<dbReference type="HOGENOM" id="CLU_100715_7_3_6"/>
<dbReference type="BioCyc" id="ECOL199310:C1147-MONOMER"/>
<dbReference type="EvolutionaryTrace" id="P0AFQ6"/>
<dbReference type="Proteomes" id="UP000001410">
    <property type="component" value="Chromosome"/>
</dbReference>
<dbReference type="GO" id="GO:0005829">
    <property type="term" value="C:cytosol"/>
    <property type="evidence" value="ECO:0007669"/>
    <property type="project" value="TreeGrafter"/>
</dbReference>
<dbReference type="GO" id="GO:0019239">
    <property type="term" value="F:deaminase activity"/>
    <property type="evidence" value="ECO:0007669"/>
    <property type="project" value="TreeGrafter"/>
</dbReference>
<dbReference type="GO" id="GO:0019740">
    <property type="term" value="P:nitrogen utilization"/>
    <property type="evidence" value="ECO:0007669"/>
    <property type="project" value="UniProtKB-UniRule"/>
</dbReference>
<dbReference type="GO" id="GO:0006212">
    <property type="term" value="P:uracil catabolic process"/>
    <property type="evidence" value="ECO:0007669"/>
    <property type="project" value="UniProtKB-UniRule"/>
</dbReference>
<dbReference type="CDD" id="cd00448">
    <property type="entry name" value="YjgF_YER057c_UK114_family"/>
    <property type="match status" value="1"/>
</dbReference>
<dbReference type="FunFam" id="3.30.1330.40:FF:000003">
    <property type="entry name" value="Putative aminoacrylate peracid reductase RutC"/>
    <property type="match status" value="1"/>
</dbReference>
<dbReference type="Gene3D" id="3.30.1330.40">
    <property type="entry name" value="RutC-like"/>
    <property type="match status" value="1"/>
</dbReference>
<dbReference type="HAMAP" id="MF_00831">
    <property type="entry name" value="RutC"/>
    <property type="match status" value="1"/>
</dbReference>
<dbReference type="InterPro" id="IPR019897">
    <property type="entry name" value="RidA_CS"/>
</dbReference>
<dbReference type="InterPro" id="IPR019898">
    <property type="entry name" value="RutC"/>
</dbReference>
<dbReference type="InterPro" id="IPR035959">
    <property type="entry name" value="RutC-like_sf"/>
</dbReference>
<dbReference type="InterPro" id="IPR006175">
    <property type="entry name" value="YjgF/YER057c/UK114"/>
</dbReference>
<dbReference type="NCBIfam" id="TIGR03610">
    <property type="entry name" value="RutC"/>
    <property type="match status" value="1"/>
</dbReference>
<dbReference type="PANTHER" id="PTHR11803">
    <property type="entry name" value="2-IMINOBUTANOATE/2-IMINOPROPANOATE DEAMINASE RIDA"/>
    <property type="match status" value="1"/>
</dbReference>
<dbReference type="PANTHER" id="PTHR11803:SF58">
    <property type="entry name" value="PROTEIN HMF1-RELATED"/>
    <property type="match status" value="1"/>
</dbReference>
<dbReference type="Pfam" id="PF01042">
    <property type="entry name" value="Ribonuc_L-PSP"/>
    <property type="match status" value="1"/>
</dbReference>
<dbReference type="SUPFAM" id="SSF55298">
    <property type="entry name" value="YjgF-like"/>
    <property type="match status" value="1"/>
</dbReference>
<dbReference type="PROSITE" id="PS01094">
    <property type="entry name" value="UPF0076"/>
    <property type="match status" value="1"/>
</dbReference>
<accession>P0AFQ6</accession>
<accession>P75896</accession>
<proteinExistence type="evidence at protein level"/>
<evidence type="ECO:0000255" key="1">
    <source>
        <dbReference type="HAMAP-Rule" id="MF_00831"/>
    </source>
</evidence>
<evidence type="ECO:0000269" key="2">
    <source>
    </source>
</evidence>
<evidence type="ECO:0000303" key="3">
    <source>
    </source>
</evidence>
<evidence type="ECO:0007744" key="4">
    <source>
        <dbReference type="PDB" id="3V4D"/>
    </source>
</evidence>
<evidence type="ECO:0007829" key="5">
    <source>
        <dbReference type="PDB" id="3V4D"/>
    </source>
</evidence>
<protein>
    <recommendedName>
        <fullName evidence="1">3-aminoacrylate deaminase RutC</fullName>
        <shortName evidence="1">3-AA deaminase</shortName>
        <ecNumber evidence="1">3.5.-.-</ecNumber>
    </recommendedName>
</protein>
<keyword id="KW-0002">3D-structure</keyword>
<keyword id="KW-0378">Hydrolase</keyword>
<keyword id="KW-1185">Reference proteome</keyword>
<gene>
    <name evidence="1 3" type="primary">rutC</name>
    <name type="ordered locus">c1147</name>
</gene>
<organism>
    <name type="scientific">Escherichia coli O6:H1 (strain CFT073 / ATCC 700928 / UPEC)</name>
    <dbReference type="NCBI Taxonomy" id="199310"/>
    <lineage>
        <taxon>Bacteria</taxon>
        <taxon>Pseudomonadati</taxon>
        <taxon>Pseudomonadota</taxon>
        <taxon>Gammaproteobacteria</taxon>
        <taxon>Enterobacterales</taxon>
        <taxon>Enterobacteriaceae</taxon>
        <taxon>Escherichia</taxon>
    </lineage>
</organism>
<sequence>MPKSVIIPAGSSAPLAPFVPGTLADGVVYVSGTLAFDQHNNVLFADDPKAQTRHVLETIRKVIETAGGTMADVTFNSIFITDWKNYAAINEIYAEFFPGDKPARFCIQCGLVKPDALVEIATIAHIAK</sequence>
<reference key="1">
    <citation type="journal article" date="2002" name="Proc. Natl. Acad. Sci. U.S.A.">
        <title>Extensive mosaic structure revealed by the complete genome sequence of uropathogenic Escherichia coli.</title>
        <authorList>
            <person name="Welch R.A."/>
            <person name="Burland V."/>
            <person name="Plunkett G. III"/>
            <person name="Redford P."/>
            <person name="Roesch P."/>
            <person name="Rasko D."/>
            <person name="Buckles E.L."/>
            <person name="Liou S.-R."/>
            <person name="Boutin A."/>
            <person name="Hackett J."/>
            <person name="Stroud D."/>
            <person name="Mayhew G.F."/>
            <person name="Rose D.J."/>
            <person name="Zhou S."/>
            <person name="Schwartz D.C."/>
            <person name="Perna N.T."/>
            <person name="Mobley H.L.T."/>
            <person name="Donnenberg M.S."/>
            <person name="Blattner F.R."/>
        </authorList>
    </citation>
    <scope>NUCLEOTIDE SEQUENCE [LARGE SCALE GENOMIC DNA]</scope>
    <source>
        <strain>CFT073 / ATCC 700928 / UPEC</strain>
    </source>
</reference>
<reference evidence="4" key="2">
    <citation type="journal article" date="2012" name="Acta Crystallogr. F">
        <title>Structure of Escherichia coli RutC, a member of the YjgF family and putative aminoacrylate peracid reductase of the rut operon.</title>
        <authorList>
            <person name="Knapik A.A."/>
            <person name="Petkowski J.J."/>
            <person name="Otwinowski Z."/>
            <person name="Cymborowski M.T."/>
            <person name="Cooper D.R."/>
            <person name="Chruszcz M."/>
            <person name="Krajewska W.M."/>
            <person name="Minor W."/>
        </authorList>
    </citation>
    <scope>X-RAY CRYSTALLOGRAPHY (1.95 ANGSTROMS)</scope>
    <scope>SUBUNIT</scope>
    <scope>DOMAIN</scope>
</reference>
<name>RUTC_ECOL6</name>